<sequence>FITAAFGIPQISTGDMLRAAIKAGTPLGLEAKKIIDEGGLVRDDIIIGMVKERIAQDDCKNGFLFDGFPRTLAQAEAIVEAGVDLDAVVEIDVPDSVIVDRMSGRRVHLASGRTYHVTYNPPKVEGKDDVTGEDLIQRDDDKEETVKKRLAVYHEQTEVLVDFYSKLEGEHAPK</sequence>
<feature type="chain" id="PRO_0000158809" description="Adenylate kinase">
    <location>
        <begin position="1" status="less than"/>
        <end position="174" status="greater than"/>
    </location>
</feature>
<feature type="region of interest" description="NMP" evidence="1">
    <location>
        <begin position="12"/>
        <end position="41"/>
    </location>
</feature>
<feature type="region of interest" description="LID" evidence="1">
    <location>
        <begin position="104"/>
        <end position="141"/>
    </location>
</feature>
<feature type="binding site" evidence="1">
    <location>
        <position position="13"/>
    </location>
    <ligand>
        <name>AMP</name>
        <dbReference type="ChEBI" id="CHEBI:456215"/>
    </ligand>
</feature>
<feature type="binding site" evidence="1">
    <location>
        <position position="18"/>
    </location>
    <ligand>
        <name>AMP</name>
        <dbReference type="ChEBI" id="CHEBI:456215"/>
    </ligand>
</feature>
<feature type="binding site" evidence="1">
    <location>
        <begin position="39"/>
        <end position="41"/>
    </location>
    <ligand>
        <name>AMP</name>
        <dbReference type="ChEBI" id="CHEBI:456215"/>
    </ligand>
</feature>
<feature type="binding site" evidence="1">
    <location>
        <begin position="67"/>
        <end position="70"/>
    </location>
    <ligand>
        <name>AMP</name>
        <dbReference type="ChEBI" id="CHEBI:456215"/>
    </ligand>
</feature>
<feature type="binding site" evidence="1">
    <location>
        <position position="74"/>
    </location>
    <ligand>
        <name>AMP</name>
        <dbReference type="ChEBI" id="CHEBI:456215"/>
    </ligand>
</feature>
<feature type="binding site" evidence="1">
    <location>
        <position position="105"/>
    </location>
    <ligand>
        <name>ATP</name>
        <dbReference type="ChEBI" id="CHEBI:30616"/>
    </ligand>
</feature>
<feature type="binding site" evidence="1">
    <location>
        <begin position="114"/>
        <end position="115"/>
    </location>
    <ligand>
        <name>ATP</name>
        <dbReference type="ChEBI" id="CHEBI:30616"/>
    </ligand>
</feature>
<feature type="binding site" evidence="1">
    <location>
        <position position="138"/>
    </location>
    <ligand>
        <name>AMP</name>
        <dbReference type="ChEBI" id="CHEBI:456215"/>
    </ligand>
</feature>
<feature type="binding site" evidence="1">
    <location>
        <position position="149"/>
    </location>
    <ligand>
        <name>AMP</name>
        <dbReference type="ChEBI" id="CHEBI:456215"/>
    </ligand>
</feature>
<feature type="non-terminal residue">
    <location>
        <position position="1"/>
    </location>
</feature>
<feature type="non-terminal residue">
    <location>
        <position position="174"/>
    </location>
</feature>
<dbReference type="EC" id="2.7.4.3" evidence="1"/>
<dbReference type="EMBL" id="U57711">
    <property type="protein sequence ID" value="AAB49186.1"/>
    <property type="molecule type" value="Genomic_DNA"/>
</dbReference>
<dbReference type="SMR" id="Q59596"/>
<dbReference type="STRING" id="484.TW91_1432"/>
<dbReference type="UniPathway" id="UPA00588">
    <property type="reaction ID" value="UER00649"/>
</dbReference>
<dbReference type="GO" id="GO:0005737">
    <property type="term" value="C:cytoplasm"/>
    <property type="evidence" value="ECO:0007669"/>
    <property type="project" value="UniProtKB-SubCell"/>
</dbReference>
<dbReference type="GO" id="GO:0004017">
    <property type="term" value="F:adenylate kinase activity"/>
    <property type="evidence" value="ECO:0007669"/>
    <property type="project" value="UniProtKB-EC"/>
</dbReference>
<dbReference type="GO" id="GO:0005524">
    <property type="term" value="F:ATP binding"/>
    <property type="evidence" value="ECO:0007669"/>
    <property type="project" value="UniProtKB-KW"/>
</dbReference>
<dbReference type="GO" id="GO:0044209">
    <property type="term" value="P:AMP salvage"/>
    <property type="evidence" value="ECO:0007669"/>
    <property type="project" value="UniProtKB-UniPathway"/>
</dbReference>
<dbReference type="CDD" id="cd01428">
    <property type="entry name" value="ADK"/>
    <property type="match status" value="1"/>
</dbReference>
<dbReference type="FunFam" id="3.40.50.300:FF:000106">
    <property type="entry name" value="Adenylate kinase mitochondrial"/>
    <property type="match status" value="1"/>
</dbReference>
<dbReference type="Gene3D" id="3.40.50.300">
    <property type="entry name" value="P-loop containing nucleotide triphosphate hydrolases"/>
    <property type="match status" value="1"/>
</dbReference>
<dbReference type="HAMAP" id="MF_00235">
    <property type="entry name" value="Adenylate_kinase_Adk"/>
    <property type="match status" value="1"/>
</dbReference>
<dbReference type="InterPro" id="IPR006259">
    <property type="entry name" value="Adenyl_kin_sub"/>
</dbReference>
<dbReference type="InterPro" id="IPR000850">
    <property type="entry name" value="Adenylat/UMP-CMP_kin"/>
</dbReference>
<dbReference type="InterPro" id="IPR033690">
    <property type="entry name" value="Adenylat_kinase_CS"/>
</dbReference>
<dbReference type="InterPro" id="IPR007862">
    <property type="entry name" value="Adenylate_kinase_lid-dom"/>
</dbReference>
<dbReference type="InterPro" id="IPR027417">
    <property type="entry name" value="P-loop_NTPase"/>
</dbReference>
<dbReference type="NCBIfam" id="TIGR01351">
    <property type="entry name" value="adk"/>
    <property type="match status" value="1"/>
</dbReference>
<dbReference type="NCBIfam" id="NF001379">
    <property type="entry name" value="PRK00279.1-1"/>
    <property type="match status" value="1"/>
</dbReference>
<dbReference type="PANTHER" id="PTHR23359">
    <property type="entry name" value="NUCLEOTIDE KINASE"/>
    <property type="match status" value="1"/>
</dbReference>
<dbReference type="Pfam" id="PF00406">
    <property type="entry name" value="ADK"/>
    <property type="match status" value="1"/>
</dbReference>
<dbReference type="Pfam" id="PF05191">
    <property type="entry name" value="ADK_lid"/>
    <property type="match status" value="1"/>
</dbReference>
<dbReference type="PRINTS" id="PR00094">
    <property type="entry name" value="ADENYLTKNASE"/>
</dbReference>
<dbReference type="SUPFAM" id="SSF52540">
    <property type="entry name" value="P-loop containing nucleoside triphosphate hydrolases"/>
    <property type="match status" value="1"/>
</dbReference>
<dbReference type="PROSITE" id="PS00113">
    <property type="entry name" value="ADENYLATE_KINASE"/>
    <property type="match status" value="1"/>
</dbReference>
<name>KAD_NEIFL</name>
<protein>
    <recommendedName>
        <fullName evidence="1">Adenylate kinase</fullName>
        <shortName evidence="1">AK</shortName>
        <ecNumber evidence="1">2.7.4.3</ecNumber>
    </recommendedName>
    <alternativeName>
        <fullName evidence="1">ATP-AMP transphosphorylase</fullName>
    </alternativeName>
    <alternativeName>
        <fullName evidence="1">ATP:AMP phosphotransferase</fullName>
    </alternativeName>
    <alternativeName>
        <fullName evidence="1">Adenylate monophosphate kinase</fullName>
    </alternativeName>
</protein>
<reference key="1">
    <citation type="journal article" date="1996" name="J. Mol. Evol.">
        <title>A comparison of the nucleotide sequences of the adk and recA genes of pathogenic and commensal Neisseria species: evidence for extensive interspecies recombination within adk.</title>
        <authorList>
            <person name="Feil E."/>
            <person name="Zhou J."/>
            <person name="Maynard Smith J."/>
            <person name="Spratt B.G."/>
        </authorList>
    </citation>
    <scope>NUCLEOTIDE SEQUENCE [GENOMIC DNA]</scope>
    <source>
        <strain>LNP 444</strain>
    </source>
</reference>
<proteinExistence type="inferred from homology"/>
<accession>Q59596</accession>
<gene>
    <name evidence="1" type="primary">adk</name>
</gene>
<evidence type="ECO:0000255" key="1">
    <source>
        <dbReference type="HAMAP-Rule" id="MF_00235"/>
    </source>
</evidence>
<keyword id="KW-0067">ATP-binding</keyword>
<keyword id="KW-0963">Cytoplasm</keyword>
<keyword id="KW-0418">Kinase</keyword>
<keyword id="KW-0545">Nucleotide biosynthesis</keyword>
<keyword id="KW-0547">Nucleotide-binding</keyword>
<keyword id="KW-0808">Transferase</keyword>
<organism>
    <name type="scientific">Neisseria flavescens</name>
    <dbReference type="NCBI Taxonomy" id="484"/>
    <lineage>
        <taxon>Bacteria</taxon>
        <taxon>Pseudomonadati</taxon>
        <taxon>Pseudomonadota</taxon>
        <taxon>Betaproteobacteria</taxon>
        <taxon>Neisseriales</taxon>
        <taxon>Neisseriaceae</taxon>
        <taxon>Neisseria</taxon>
    </lineage>
</organism>
<comment type="function">
    <text evidence="1">Catalyzes the reversible transfer of the terminal phosphate group between ATP and AMP. Plays an important role in cellular energy homeostasis and in adenine nucleotide metabolism.</text>
</comment>
<comment type="catalytic activity">
    <reaction evidence="1">
        <text>AMP + ATP = 2 ADP</text>
        <dbReference type="Rhea" id="RHEA:12973"/>
        <dbReference type="ChEBI" id="CHEBI:30616"/>
        <dbReference type="ChEBI" id="CHEBI:456215"/>
        <dbReference type="ChEBI" id="CHEBI:456216"/>
        <dbReference type="EC" id="2.7.4.3"/>
    </reaction>
</comment>
<comment type="pathway">
    <text evidence="1">Purine metabolism; AMP biosynthesis via salvage pathway; AMP from ADP: step 1/1.</text>
</comment>
<comment type="subunit">
    <text evidence="1">Monomer.</text>
</comment>
<comment type="subcellular location">
    <subcellularLocation>
        <location evidence="1">Cytoplasm</location>
    </subcellularLocation>
</comment>
<comment type="domain">
    <text evidence="1">Consists of three domains, a large central CORE domain and two small peripheral domains, NMPbind and LID, which undergo movements during catalysis. The LID domain closes over the site of phosphoryl transfer upon ATP binding. Assembling and dissambling the active center during each catalytic cycle provides an effective means to prevent ATP hydrolysis.</text>
</comment>
<comment type="similarity">
    <text evidence="1">Belongs to the adenylate kinase family.</text>
</comment>